<protein>
    <recommendedName>
        <fullName>Probable disease resistance protein At5g66900</fullName>
    </recommendedName>
</protein>
<keyword id="KW-0002">3D-structure</keyword>
<keyword id="KW-0067">ATP-binding</keyword>
<keyword id="KW-0175">Coiled coil</keyword>
<keyword id="KW-0433">Leucine-rich repeat</keyword>
<keyword id="KW-0547">Nucleotide-binding</keyword>
<keyword id="KW-0611">Plant defense</keyword>
<keyword id="KW-1185">Reference proteome</keyword>
<keyword id="KW-0677">Repeat</keyword>
<sequence length="809" mass="92245">MNDWASLGIGSIGEAVFSKLLKVVIDEAKKFKAFKPLSKDLVSTMEILFPLTQKIDSMQKELDFGVKELKELRDTIERADVAVRKFPRVKWYEKSKYTRKIERINKDMLKFCQIDLQLLQHRNQLTLLGLTGNLVNSVDGLSKRMDLLSVPAPVFRDLCSVPKLDKVIVGLDWPLGELKKRLLDDSVVTLVVSAPPGCGKTTLVSRLCDDPDIKGKFKHIFFNVVSNTPNFRVIVQNLLQHNGYNALTFENDSQAEVGLRKLLEELKENGPILLVLDDVWRGADSFLQKFQIKLPNYKILVTSRFDFPSFDSNYRLKPLEDDDARALLIHWASRPCNTSPDEYEDLLQKILKRCNGFPIVIEVVGVSLKGRSLNTWKGQVESWSEGEKILGKPYPTVLECLQPSFDALDPNLKECFLDMGSFLEDQKIRASVIIDMWVELYGKGSSILYMYLEDLASQNLLKLVPLGTNEHEDGFYNDFLVTQHDILRELAICQSEFKENLERKRLNLEILENTFPDWCLNTINASLLSISTDDLFSSKWLEMDCPNVEALVLNLSSSDYALPSFISGMKKLKVLTITNHGFYPARLSNFSCLSSLPNLKRIRLEKVSITLLDIPQLQLSSLKKLSLVMCSFGEVFYDTEDIVVSNALSKLQEIDIDYCYDLDELPYWISEIVSLKTLSITNCNKLSQLPEAIGNLSRLEVLRLCSSMNLSELPEATEGLSNLRFLDISHCLGLRKLPQEIGKLQNLKKISMRKCSGCELPESVTNLENLEVKCDEETGLLWERLKPKMRNLRVQEEEIEHNLNLLQMF</sequence>
<comment type="function">
    <text evidence="1">Probable disease resistance protein.</text>
</comment>
<comment type="domain">
    <text evidence="1">The LRR repeats probably act as specificity determinant of pathogen recognition.</text>
</comment>
<comment type="similarity">
    <text evidence="4">Belongs to the disease resistance NB-LRR family.</text>
</comment>
<comment type="online information" name="NIB-LRRS">
    <link uri="http://niblrrs.ucdavis.edu"/>
    <text>Functional and comparative genomics of disease resistance gene homologs</text>
</comment>
<dbReference type="EMBL" id="AB010700">
    <property type="protein sequence ID" value="BAB08632.1"/>
    <property type="molecule type" value="Genomic_DNA"/>
</dbReference>
<dbReference type="EMBL" id="CP002688">
    <property type="protein sequence ID" value="AED98276.1"/>
    <property type="molecule type" value="Genomic_DNA"/>
</dbReference>
<dbReference type="RefSeq" id="NP_201491.1">
    <property type="nucleotide sequence ID" value="NM_126089.3"/>
</dbReference>
<dbReference type="PDB" id="7L7V">
    <property type="method" value="X-ray"/>
    <property type="resolution" value="2.95 A"/>
    <property type="chains" value="A/B/C/D/E/F=1-124"/>
</dbReference>
<dbReference type="PDB" id="7L7W">
    <property type="method" value="X-ray"/>
    <property type="resolution" value="2.55 A"/>
    <property type="chains" value="A=1-124"/>
</dbReference>
<dbReference type="PDB" id="8YL6">
    <property type="method" value="EM"/>
    <property type="resolution" value="3.10 A"/>
    <property type="chains" value="C=1-809"/>
</dbReference>
<dbReference type="PDB" id="8YN1">
    <property type="method" value="EM"/>
    <property type="resolution" value="3.09 A"/>
    <property type="chains" value="C=404-809"/>
</dbReference>
<dbReference type="PDBsum" id="7L7V"/>
<dbReference type="PDBsum" id="7L7W"/>
<dbReference type="PDBsum" id="8YL6"/>
<dbReference type="PDBsum" id="8YN1"/>
<dbReference type="EMDB" id="EMD-39383"/>
<dbReference type="EMDB" id="EMD-39411"/>
<dbReference type="SMR" id="Q9FKZ1"/>
<dbReference type="FunCoup" id="Q9FKZ1">
    <property type="interactions" value="152"/>
</dbReference>
<dbReference type="STRING" id="3702.Q9FKZ1"/>
<dbReference type="PaxDb" id="3702-AT5G66900.1"/>
<dbReference type="EnsemblPlants" id="AT5G66900.1">
    <property type="protein sequence ID" value="AT5G66900.1"/>
    <property type="gene ID" value="AT5G66900"/>
</dbReference>
<dbReference type="GeneID" id="836824"/>
<dbReference type="Gramene" id="AT5G66900.1">
    <property type="protein sequence ID" value="AT5G66900.1"/>
    <property type="gene ID" value="AT5G66900"/>
</dbReference>
<dbReference type="KEGG" id="ath:AT5G66900"/>
<dbReference type="Araport" id="AT5G66900"/>
<dbReference type="TAIR" id="AT5G66900">
    <property type="gene designation" value="NRG1.1"/>
</dbReference>
<dbReference type="eggNOG" id="ENOG502QSSA">
    <property type="taxonomic scope" value="Eukaryota"/>
</dbReference>
<dbReference type="HOGENOM" id="CLU_012216_0_0_1"/>
<dbReference type="InParanoid" id="Q9FKZ1"/>
<dbReference type="PhylomeDB" id="Q9FKZ1"/>
<dbReference type="PRO" id="PR:Q9FKZ1"/>
<dbReference type="Proteomes" id="UP000006548">
    <property type="component" value="Chromosome 5"/>
</dbReference>
<dbReference type="ExpressionAtlas" id="Q9FKZ1">
    <property type="expression patterns" value="baseline and differential"/>
</dbReference>
<dbReference type="GO" id="GO:0005829">
    <property type="term" value="C:cytosol"/>
    <property type="evidence" value="ECO:0000314"/>
    <property type="project" value="TAIR"/>
</dbReference>
<dbReference type="GO" id="GO:0012505">
    <property type="term" value="C:endomembrane system"/>
    <property type="evidence" value="ECO:0000314"/>
    <property type="project" value="TAIR"/>
</dbReference>
<dbReference type="GO" id="GO:0043531">
    <property type="term" value="F:ADP binding"/>
    <property type="evidence" value="ECO:0007669"/>
    <property type="project" value="InterPro"/>
</dbReference>
<dbReference type="GO" id="GO:0005524">
    <property type="term" value="F:ATP binding"/>
    <property type="evidence" value="ECO:0007669"/>
    <property type="project" value="UniProtKB-KW"/>
</dbReference>
<dbReference type="GO" id="GO:0006952">
    <property type="term" value="P:defense response"/>
    <property type="evidence" value="ECO:0007669"/>
    <property type="project" value="UniProtKB-KW"/>
</dbReference>
<dbReference type="FunFam" id="3.80.10.10:FF:001428">
    <property type="entry name" value="Probable disease resistance protein At5g04720"/>
    <property type="match status" value="1"/>
</dbReference>
<dbReference type="FunFam" id="3.80.10.10:FF:002186">
    <property type="entry name" value="Probable disease resistance protein At5g04720"/>
    <property type="match status" value="1"/>
</dbReference>
<dbReference type="FunFam" id="3.40.50.300:FF:003793">
    <property type="entry name" value="Probable disease resistance protein At5g66900"/>
    <property type="match status" value="1"/>
</dbReference>
<dbReference type="Gene3D" id="1.10.8.430">
    <property type="entry name" value="Helical domain of apoptotic protease-activating factors"/>
    <property type="match status" value="1"/>
</dbReference>
<dbReference type="Gene3D" id="3.40.50.300">
    <property type="entry name" value="P-loop containing nucleotide triphosphate hydrolases"/>
    <property type="match status" value="1"/>
</dbReference>
<dbReference type="Gene3D" id="3.80.10.10">
    <property type="entry name" value="Ribonuclease Inhibitor"/>
    <property type="match status" value="1"/>
</dbReference>
<dbReference type="Gene3D" id="1.10.10.10">
    <property type="entry name" value="Winged helix-like DNA-binding domain superfamily/Winged helix DNA-binding domain"/>
    <property type="match status" value="1"/>
</dbReference>
<dbReference type="InterPro" id="IPR042197">
    <property type="entry name" value="Apaf_helical"/>
</dbReference>
<dbReference type="InterPro" id="IPR001611">
    <property type="entry name" value="Leu-rich_rpt"/>
</dbReference>
<dbReference type="InterPro" id="IPR032675">
    <property type="entry name" value="LRR_dom_sf"/>
</dbReference>
<dbReference type="InterPro" id="IPR002182">
    <property type="entry name" value="NB-ARC"/>
</dbReference>
<dbReference type="InterPro" id="IPR027417">
    <property type="entry name" value="P-loop_NTPase"/>
</dbReference>
<dbReference type="InterPro" id="IPR008808">
    <property type="entry name" value="Powdery_mildew-R_dom"/>
</dbReference>
<dbReference type="InterPro" id="IPR036388">
    <property type="entry name" value="WH-like_DNA-bd_sf"/>
</dbReference>
<dbReference type="PANTHER" id="PTHR36766">
    <property type="entry name" value="PLANT BROAD-SPECTRUM MILDEW RESISTANCE PROTEIN RPW8"/>
    <property type="match status" value="1"/>
</dbReference>
<dbReference type="PANTHER" id="PTHR36766:SF3">
    <property type="entry name" value="RPW8 DOMAIN-CONTAINING PROTEIN"/>
    <property type="match status" value="1"/>
</dbReference>
<dbReference type="Pfam" id="PF00560">
    <property type="entry name" value="LRR_1"/>
    <property type="match status" value="1"/>
</dbReference>
<dbReference type="Pfam" id="PF00931">
    <property type="entry name" value="NB-ARC"/>
    <property type="match status" value="1"/>
</dbReference>
<dbReference type="Pfam" id="PF05659">
    <property type="entry name" value="RPW8"/>
    <property type="match status" value="1"/>
</dbReference>
<dbReference type="PRINTS" id="PR00364">
    <property type="entry name" value="DISEASERSIST"/>
</dbReference>
<dbReference type="SUPFAM" id="SSF52058">
    <property type="entry name" value="L domain-like"/>
    <property type="match status" value="1"/>
</dbReference>
<dbReference type="SUPFAM" id="SSF52540">
    <property type="entry name" value="P-loop containing nucleoside triphosphate hydrolases"/>
    <property type="match status" value="1"/>
</dbReference>
<dbReference type="PROSITE" id="PS51153">
    <property type="entry name" value="RPW8"/>
    <property type="match status" value="1"/>
</dbReference>
<reference key="1">
    <citation type="journal article" date="1998" name="DNA Res.">
        <title>Structural analysis of Arabidopsis thaliana chromosome 5. V. Sequence features of the regions of 1,381,565 bp covered by twenty one physically assigned P1 and TAC clones.</title>
        <authorList>
            <person name="Kaneko T."/>
            <person name="Kotani H."/>
            <person name="Nakamura Y."/>
            <person name="Sato S."/>
            <person name="Asamizu E."/>
            <person name="Miyajima N."/>
            <person name="Tabata S."/>
        </authorList>
    </citation>
    <scope>NUCLEOTIDE SEQUENCE [LARGE SCALE GENOMIC DNA]</scope>
    <source>
        <strain>cv. Columbia</strain>
    </source>
</reference>
<reference key="2">
    <citation type="journal article" date="2017" name="Plant J.">
        <title>Araport11: a complete reannotation of the Arabidopsis thaliana reference genome.</title>
        <authorList>
            <person name="Cheng C.Y."/>
            <person name="Krishnakumar V."/>
            <person name="Chan A.P."/>
            <person name="Thibaud-Nissen F."/>
            <person name="Schobel S."/>
            <person name="Town C.D."/>
        </authorList>
    </citation>
    <scope>GENOME REANNOTATION</scope>
    <source>
        <strain>cv. Columbia</strain>
    </source>
</reference>
<feature type="chain" id="PRO_0000212774" description="Probable disease resistance protein At5g66900">
    <location>
        <begin position="1"/>
        <end position="809"/>
    </location>
</feature>
<feature type="domain" description="RPW8" evidence="3">
    <location>
        <begin position="1"/>
        <end position="150"/>
    </location>
</feature>
<feature type="domain" description="NB-ARC 1">
    <location>
        <begin position="153"/>
        <end position="280"/>
    </location>
</feature>
<feature type="domain" description="NB-ARC 2">
    <location>
        <begin position="339"/>
        <end position="438"/>
    </location>
</feature>
<feature type="repeat" description="LRR 1">
    <location>
        <begin position="650"/>
        <end position="672"/>
    </location>
</feature>
<feature type="repeat" description="LRR 2">
    <location>
        <begin position="674"/>
        <end position="696"/>
    </location>
</feature>
<feature type="repeat" description="LRR 3">
    <location>
        <begin position="698"/>
        <end position="720"/>
    </location>
</feature>
<feature type="repeat" description="LRR 4">
    <location>
        <begin position="722"/>
        <end position="744"/>
    </location>
</feature>
<feature type="coiled-coil region" evidence="2">
    <location>
        <begin position="50"/>
        <end position="86"/>
    </location>
</feature>
<feature type="coiled-coil region" evidence="2">
    <location>
        <begin position="494"/>
        <end position="515"/>
    </location>
</feature>
<feature type="binding site" evidence="2">
    <location>
        <begin position="194"/>
        <end position="201"/>
    </location>
    <ligand>
        <name>ATP</name>
        <dbReference type="ChEBI" id="CHEBI:30616"/>
    </ligand>
</feature>
<feature type="helix" evidence="5">
    <location>
        <begin position="1"/>
        <end position="6"/>
    </location>
</feature>
<feature type="strand" evidence="5">
    <location>
        <begin position="11"/>
        <end position="15"/>
    </location>
</feature>
<feature type="helix" evidence="6">
    <location>
        <begin position="17"/>
        <end position="29"/>
    </location>
</feature>
<feature type="helix" evidence="6">
    <location>
        <begin position="35"/>
        <end position="38"/>
    </location>
</feature>
<feature type="helix" evidence="6">
    <location>
        <begin position="40"/>
        <end position="57"/>
    </location>
</feature>
<feature type="turn" evidence="6">
    <location>
        <begin position="58"/>
        <end position="61"/>
    </location>
</feature>
<feature type="strand" evidence="5">
    <location>
        <begin position="64"/>
        <end position="66"/>
    </location>
</feature>
<feature type="helix" evidence="6">
    <location>
        <begin position="67"/>
        <end position="85"/>
    </location>
</feature>
<feature type="helix" evidence="6">
    <location>
        <begin position="86"/>
        <end position="88"/>
    </location>
</feature>
<feature type="helix" evidence="6">
    <location>
        <begin position="91"/>
        <end position="93"/>
    </location>
</feature>
<feature type="helix" evidence="6">
    <location>
        <begin position="94"/>
        <end position="111"/>
    </location>
</feature>
<feature type="helix" evidence="6">
    <location>
        <begin position="116"/>
        <end position="124"/>
    </location>
</feature>
<feature type="turn" evidence="7">
    <location>
        <begin position="405"/>
        <end position="407"/>
    </location>
</feature>
<feature type="helix" evidence="7">
    <location>
        <begin position="410"/>
        <end position="417"/>
    </location>
</feature>
<feature type="helix" evidence="7">
    <location>
        <begin position="418"/>
        <end position="421"/>
    </location>
</feature>
<feature type="helix" evidence="7">
    <location>
        <begin position="430"/>
        <end position="441"/>
    </location>
</feature>
<feature type="helix" evidence="7">
    <location>
        <begin position="445"/>
        <end position="457"/>
    </location>
</feature>
<feature type="strand" evidence="7">
    <location>
        <begin position="460"/>
        <end position="465"/>
    </location>
</feature>
<feature type="strand" evidence="7">
    <location>
        <begin position="479"/>
        <end position="482"/>
    </location>
</feature>
<feature type="helix" evidence="7">
    <location>
        <begin position="485"/>
        <end position="493"/>
    </location>
</feature>
<feature type="strand" evidence="7">
    <location>
        <begin position="496"/>
        <end position="498"/>
    </location>
</feature>
<feature type="helix" evidence="7">
    <location>
        <begin position="500"/>
        <end position="502"/>
    </location>
</feature>
<feature type="strand" evidence="7">
    <location>
        <begin position="504"/>
        <end position="509"/>
    </location>
</feature>
<feature type="turn" evidence="7">
    <location>
        <begin position="517"/>
        <end position="520"/>
    </location>
</feature>
<feature type="strand" evidence="7">
    <location>
        <begin position="526"/>
        <end position="531"/>
    </location>
</feature>
<feature type="strand" evidence="7">
    <location>
        <begin position="550"/>
        <end position="555"/>
    </location>
</feature>
<feature type="strand" evidence="7">
    <location>
        <begin position="558"/>
        <end position="561"/>
    </location>
</feature>
<feature type="helix" evidence="7">
    <location>
        <begin position="564"/>
        <end position="568"/>
    </location>
</feature>
<feature type="strand" evidence="7">
    <location>
        <begin position="574"/>
        <end position="579"/>
    </location>
</feature>
<feature type="strand" evidence="7">
    <location>
        <begin position="581"/>
        <end position="583"/>
    </location>
</feature>
<feature type="strand" evidence="7">
    <location>
        <begin position="585"/>
        <end position="588"/>
    </location>
</feature>
<feature type="helix" evidence="7">
    <location>
        <begin position="591"/>
        <end position="595"/>
    </location>
</feature>
<feature type="strand" evidence="7">
    <location>
        <begin position="601"/>
        <end position="608"/>
    </location>
</feature>
<feature type="helix" evidence="7">
    <location>
        <begin position="613"/>
        <end position="616"/>
    </location>
</feature>
<feature type="strand" evidence="7">
    <location>
        <begin position="624"/>
        <end position="629"/>
    </location>
</feature>
<feature type="helix" evidence="7">
    <location>
        <begin position="644"/>
        <end position="647"/>
    </location>
</feature>
<feature type="turn" evidence="7">
    <location>
        <begin position="648"/>
        <end position="650"/>
    </location>
</feature>
<feature type="strand" evidence="7">
    <location>
        <begin position="653"/>
        <end position="658"/>
    </location>
</feature>
<feature type="helix" evidence="7">
    <location>
        <begin position="668"/>
        <end position="671"/>
    </location>
</feature>
<feature type="strand" evidence="7">
    <location>
        <begin position="679"/>
        <end position="682"/>
    </location>
</feature>
<feature type="helix" evidence="7">
    <location>
        <begin position="693"/>
        <end position="695"/>
    </location>
</feature>
<feature type="helix" evidence="7">
    <location>
        <begin position="715"/>
        <end position="719"/>
    </location>
</feature>
<feature type="helix" evidence="7">
    <location>
        <begin position="741"/>
        <end position="743"/>
    </location>
</feature>
<feature type="strand" evidence="7">
    <location>
        <begin position="749"/>
        <end position="751"/>
    </location>
</feature>
<feature type="helix" evidence="7">
    <location>
        <begin position="762"/>
        <end position="766"/>
    </location>
</feature>
<feature type="strand" evidence="7">
    <location>
        <begin position="771"/>
        <end position="774"/>
    </location>
</feature>
<feature type="helix" evidence="7">
    <location>
        <begin position="776"/>
        <end position="783"/>
    </location>
</feature>
<feature type="helix" evidence="7">
    <location>
        <begin position="786"/>
        <end position="788"/>
    </location>
</feature>
<feature type="strand" evidence="7">
    <location>
        <begin position="793"/>
        <end position="796"/>
    </location>
</feature>
<feature type="helix" evidence="7">
    <location>
        <begin position="804"/>
        <end position="807"/>
    </location>
</feature>
<gene>
    <name type="ordered locus">At5g66900</name>
    <name type="ORF">MUD21.16</name>
</gene>
<proteinExistence type="evidence at protein level"/>
<evidence type="ECO:0000250" key="1"/>
<evidence type="ECO:0000255" key="2"/>
<evidence type="ECO:0000255" key="3">
    <source>
        <dbReference type="PROSITE-ProRule" id="PRU00495"/>
    </source>
</evidence>
<evidence type="ECO:0000305" key="4"/>
<evidence type="ECO:0007829" key="5">
    <source>
        <dbReference type="PDB" id="7L7V"/>
    </source>
</evidence>
<evidence type="ECO:0007829" key="6">
    <source>
        <dbReference type="PDB" id="7L7W"/>
    </source>
</evidence>
<evidence type="ECO:0007829" key="7">
    <source>
        <dbReference type="PDB" id="8YN1"/>
    </source>
</evidence>
<accession>Q9FKZ1</accession>
<organism>
    <name type="scientific">Arabidopsis thaliana</name>
    <name type="common">Mouse-ear cress</name>
    <dbReference type="NCBI Taxonomy" id="3702"/>
    <lineage>
        <taxon>Eukaryota</taxon>
        <taxon>Viridiplantae</taxon>
        <taxon>Streptophyta</taxon>
        <taxon>Embryophyta</taxon>
        <taxon>Tracheophyta</taxon>
        <taxon>Spermatophyta</taxon>
        <taxon>Magnoliopsida</taxon>
        <taxon>eudicotyledons</taxon>
        <taxon>Gunneridae</taxon>
        <taxon>Pentapetalae</taxon>
        <taxon>rosids</taxon>
        <taxon>malvids</taxon>
        <taxon>Brassicales</taxon>
        <taxon>Brassicaceae</taxon>
        <taxon>Camelineae</taxon>
        <taxon>Arabidopsis</taxon>
    </lineage>
</organism>
<name>DRL42_ARATH</name>